<protein>
    <recommendedName>
        <fullName evidence="1">Adenylosuccinate synthetase</fullName>
        <shortName evidence="1">AMPSase</shortName>
        <shortName evidence="1">AdSS</shortName>
        <ecNumber evidence="1">6.3.4.4</ecNumber>
    </recommendedName>
    <alternativeName>
        <fullName evidence="1">IMP--aspartate ligase</fullName>
    </alternativeName>
</protein>
<comment type="function">
    <text evidence="1">Plays an important role in the de novo pathway of purine nucleotide biosynthesis. Catalyzes the first committed step in the biosynthesis of AMP from IMP.</text>
</comment>
<comment type="catalytic activity">
    <reaction evidence="1">
        <text>IMP + L-aspartate + GTP = N(6)-(1,2-dicarboxyethyl)-AMP + GDP + phosphate + 2 H(+)</text>
        <dbReference type="Rhea" id="RHEA:15753"/>
        <dbReference type="ChEBI" id="CHEBI:15378"/>
        <dbReference type="ChEBI" id="CHEBI:29991"/>
        <dbReference type="ChEBI" id="CHEBI:37565"/>
        <dbReference type="ChEBI" id="CHEBI:43474"/>
        <dbReference type="ChEBI" id="CHEBI:57567"/>
        <dbReference type="ChEBI" id="CHEBI:58053"/>
        <dbReference type="ChEBI" id="CHEBI:58189"/>
        <dbReference type="EC" id="6.3.4.4"/>
    </reaction>
</comment>
<comment type="cofactor">
    <cofactor evidence="1">
        <name>Mg(2+)</name>
        <dbReference type="ChEBI" id="CHEBI:18420"/>
    </cofactor>
    <text evidence="1">Binds 1 Mg(2+) ion per subunit.</text>
</comment>
<comment type="pathway">
    <text evidence="1">Purine metabolism; AMP biosynthesis via de novo pathway; AMP from IMP: step 1/2.</text>
</comment>
<comment type="subunit">
    <text evidence="1">Homodimer.</text>
</comment>
<comment type="subcellular location">
    <subcellularLocation>
        <location evidence="1">Cytoplasm</location>
    </subcellularLocation>
</comment>
<comment type="similarity">
    <text evidence="1">Belongs to the adenylosuccinate synthetase family.</text>
</comment>
<dbReference type="EC" id="6.3.4.4" evidence="1"/>
<dbReference type="EMBL" id="CP000492">
    <property type="protein sequence ID" value="ABL66378.1"/>
    <property type="molecule type" value="Genomic_DNA"/>
</dbReference>
<dbReference type="RefSeq" id="WP_011746161.1">
    <property type="nucleotide sequence ID" value="NC_008639.1"/>
</dbReference>
<dbReference type="SMR" id="A1BJ01"/>
<dbReference type="STRING" id="290317.Cpha266_2390"/>
<dbReference type="KEGG" id="cph:Cpha266_2390"/>
<dbReference type="eggNOG" id="COG0104">
    <property type="taxonomic scope" value="Bacteria"/>
</dbReference>
<dbReference type="HOGENOM" id="CLU_029848_0_0_10"/>
<dbReference type="OrthoDB" id="9807553at2"/>
<dbReference type="UniPathway" id="UPA00075">
    <property type="reaction ID" value="UER00335"/>
</dbReference>
<dbReference type="Proteomes" id="UP000008701">
    <property type="component" value="Chromosome"/>
</dbReference>
<dbReference type="GO" id="GO:0005737">
    <property type="term" value="C:cytoplasm"/>
    <property type="evidence" value="ECO:0007669"/>
    <property type="project" value="UniProtKB-SubCell"/>
</dbReference>
<dbReference type="GO" id="GO:0004019">
    <property type="term" value="F:adenylosuccinate synthase activity"/>
    <property type="evidence" value="ECO:0007669"/>
    <property type="project" value="UniProtKB-UniRule"/>
</dbReference>
<dbReference type="GO" id="GO:0005525">
    <property type="term" value="F:GTP binding"/>
    <property type="evidence" value="ECO:0007669"/>
    <property type="project" value="UniProtKB-UniRule"/>
</dbReference>
<dbReference type="GO" id="GO:0000287">
    <property type="term" value="F:magnesium ion binding"/>
    <property type="evidence" value="ECO:0007669"/>
    <property type="project" value="UniProtKB-UniRule"/>
</dbReference>
<dbReference type="GO" id="GO:0044208">
    <property type="term" value="P:'de novo' AMP biosynthetic process"/>
    <property type="evidence" value="ECO:0007669"/>
    <property type="project" value="UniProtKB-UniRule"/>
</dbReference>
<dbReference type="GO" id="GO:0046040">
    <property type="term" value="P:IMP metabolic process"/>
    <property type="evidence" value="ECO:0007669"/>
    <property type="project" value="TreeGrafter"/>
</dbReference>
<dbReference type="CDD" id="cd03108">
    <property type="entry name" value="AdSS"/>
    <property type="match status" value="1"/>
</dbReference>
<dbReference type="FunFam" id="1.10.300.10:FF:000001">
    <property type="entry name" value="Adenylosuccinate synthetase"/>
    <property type="match status" value="1"/>
</dbReference>
<dbReference type="FunFam" id="3.90.170.10:FF:000001">
    <property type="entry name" value="Adenylosuccinate synthetase"/>
    <property type="match status" value="1"/>
</dbReference>
<dbReference type="Gene3D" id="3.40.440.10">
    <property type="entry name" value="Adenylosuccinate Synthetase, subunit A, domain 1"/>
    <property type="match status" value="1"/>
</dbReference>
<dbReference type="Gene3D" id="1.10.300.10">
    <property type="entry name" value="Adenylosuccinate Synthetase, subunit A, domain 2"/>
    <property type="match status" value="1"/>
</dbReference>
<dbReference type="Gene3D" id="3.90.170.10">
    <property type="entry name" value="Adenylosuccinate Synthetase, subunit A, domain 3"/>
    <property type="match status" value="1"/>
</dbReference>
<dbReference type="HAMAP" id="MF_00011">
    <property type="entry name" value="Adenylosucc_synth"/>
    <property type="match status" value="1"/>
</dbReference>
<dbReference type="InterPro" id="IPR018220">
    <property type="entry name" value="Adenylosuccin_syn_GTP-bd"/>
</dbReference>
<dbReference type="InterPro" id="IPR033128">
    <property type="entry name" value="Adenylosuccin_syn_Lys_AS"/>
</dbReference>
<dbReference type="InterPro" id="IPR042109">
    <property type="entry name" value="Adenylosuccinate_synth_dom1"/>
</dbReference>
<dbReference type="InterPro" id="IPR042110">
    <property type="entry name" value="Adenylosuccinate_synth_dom2"/>
</dbReference>
<dbReference type="InterPro" id="IPR042111">
    <property type="entry name" value="Adenylosuccinate_synth_dom3"/>
</dbReference>
<dbReference type="InterPro" id="IPR001114">
    <property type="entry name" value="Adenylosuccinate_synthetase"/>
</dbReference>
<dbReference type="InterPro" id="IPR027417">
    <property type="entry name" value="P-loop_NTPase"/>
</dbReference>
<dbReference type="NCBIfam" id="NF002223">
    <property type="entry name" value="PRK01117.1"/>
    <property type="match status" value="1"/>
</dbReference>
<dbReference type="NCBIfam" id="TIGR00184">
    <property type="entry name" value="purA"/>
    <property type="match status" value="1"/>
</dbReference>
<dbReference type="PANTHER" id="PTHR11846">
    <property type="entry name" value="ADENYLOSUCCINATE SYNTHETASE"/>
    <property type="match status" value="1"/>
</dbReference>
<dbReference type="PANTHER" id="PTHR11846:SF0">
    <property type="entry name" value="ADENYLOSUCCINATE SYNTHETASE"/>
    <property type="match status" value="1"/>
</dbReference>
<dbReference type="Pfam" id="PF00709">
    <property type="entry name" value="Adenylsucc_synt"/>
    <property type="match status" value="1"/>
</dbReference>
<dbReference type="SMART" id="SM00788">
    <property type="entry name" value="Adenylsucc_synt"/>
    <property type="match status" value="1"/>
</dbReference>
<dbReference type="SUPFAM" id="SSF52540">
    <property type="entry name" value="P-loop containing nucleoside triphosphate hydrolases"/>
    <property type="match status" value="1"/>
</dbReference>
<dbReference type="PROSITE" id="PS01266">
    <property type="entry name" value="ADENYLOSUCCIN_SYN_1"/>
    <property type="match status" value="1"/>
</dbReference>
<dbReference type="PROSITE" id="PS00513">
    <property type="entry name" value="ADENYLOSUCCIN_SYN_2"/>
    <property type="match status" value="1"/>
</dbReference>
<keyword id="KW-0963">Cytoplasm</keyword>
<keyword id="KW-0342">GTP-binding</keyword>
<keyword id="KW-0436">Ligase</keyword>
<keyword id="KW-0460">Magnesium</keyword>
<keyword id="KW-0479">Metal-binding</keyword>
<keyword id="KW-0547">Nucleotide-binding</keyword>
<keyword id="KW-0658">Purine biosynthesis</keyword>
<keyword id="KW-1185">Reference proteome</keyword>
<accession>A1BJ01</accession>
<feature type="chain" id="PRO_1000000799" description="Adenylosuccinate synthetase">
    <location>
        <begin position="1"/>
        <end position="434"/>
    </location>
</feature>
<feature type="active site" description="Proton acceptor" evidence="1">
    <location>
        <position position="23"/>
    </location>
</feature>
<feature type="active site" description="Proton donor" evidence="1">
    <location>
        <position position="51"/>
    </location>
</feature>
<feature type="binding site" evidence="1">
    <location>
        <begin position="22"/>
        <end position="28"/>
    </location>
    <ligand>
        <name>GTP</name>
        <dbReference type="ChEBI" id="CHEBI:37565"/>
    </ligand>
</feature>
<feature type="binding site" description="in other chain" evidence="1">
    <location>
        <begin position="23"/>
        <end position="26"/>
    </location>
    <ligand>
        <name>IMP</name>
        <dbReference type="ChEBI" id="CHEBI:58053"/>
        <note>ligand shared between dimeric partners</note>
    </ligand>
</feature>
<feature type="binding site" evidence="1">
    <location>
        <position position="23"/>
    </location>
    <ligand>
        <name>Mg(2+)</name>
        <dbReference type="ChEBI" id="CHEBI:18420"/>
    </ligand>
</feature>
<feature type="binding site" description="in other chain" evidence="1">
    <location>
        <begin position="48"/>
        <end position="51"/>
    </location>
    <ligand>
        <name>IMP</name>
        <dbReference type="ChEBI" id="CHEBI:58053"/>
        <note>ligand shared between dimeric partners</note>
    </ligand>
</feature>
<feature type="binding site" evidence="1">
    <location>
        <begin position="50"/>
        <end position="52"/>
    </location>
    <ligand>
        <name>GTP</name>
        <dbReference type="ChEBI" id="CHEBI:37565"/>
    </ligand>
</feature>
<feature type="binding site" evidence="1">
    <location>
        <position position="50"/>
    </location>
    <ligand>
        <name>Mg(2+)</name>
        <dbReference type="ChEBI" id="CHEBI:18420"/>
    </ligand>
</feature>
<feature type="binding site" description="in other chain" evidence="1">
    <location>
        <position position="139"/>
    </location>
    <ligand>
        <name>IMP</name>
        <dbReference type="ChEBI" id="CHEBI:58053"/>
        <note>ligand shared between dimeric partners</note>
    </ligand>
</feature>
<feature type="binding site" evidence="1">
    <location>
        <position position="153"/>
    </location>
    <ligand>
        <name>IMP</name>
        <dbReference type="ChEBI" id="CHEBI:58053"/>
        <note>ligand shared between dimeric partners</note>
    </ligand>
</feature>
<feature type="binding site" description="in other chain" evidence="1">
    <location>
        <position position="234"/>
    </location>
    <ligand>
        <name>IMP</name>
        <dbReference type="ChEBI" id="CHEBI:58053"/>
        <note>ligand shared between dimeric partners</note>
    </ligand>
</feature>
<feature type="binding site" description="in other chain" evidence="1">
    <location>
        <position position="249"/>
    </location>
    <ligand>
        <name>IMP</name>
        <dbReference type="ChEBI" id="CHEBI:58053"/>
        <note>ligand shared between dimeric partners</note>
    </ligand>
</feature>
<feature type="binding site" evidence="1">
    <location>
        <begin position="309"/>
        <end position="315"/>
    </location>
    <ligand>
        <name>substrate</name>
    </ligand>
</feature>
<feature type="binding site" description="in other chain" evidence="1">
    <location>
        <position position="313"/>
    </location>
    <ligand>
        <name>IMP</name>
        <dbReference type="ChEBI" id="CHEBI:58053"/>
        <note>ligand shared between dimeric partners</note>
    </ligand>
</feature>
<feature type="binding site" evidence="1">
    <location>
        <position position="315"/>
    </location>
    <ligand>
        <name>GTP</name>
        <dbReference type="ChEBI" id="CHEBI:37565"/>
    </ligand>
</feature>
<feature type="binding site" evidence="1">
    <location>
        <begin position="341"/>
        <end position="343"/>
    </location>
    <ligand>
        <name>GTP</name>
        <dbReference type="ChEBI" id="CHEBI:37565"/>
    </ligand>
</feature>
<feature type="binding site" evidence="1">
    <location>
        <begin position="423"/>
        <end position="425"/>
    </location>
    <ligand>
        <name>GTP</name>
        <dbReference type="ChEBI" id="CHEBI:37565"/>
    </ligand>
</feature>
<name>PURA_CHLPD</name>
<proteinExistence type="inferred from homology"/>
<reference key="1">
    <citation type="submission" date="2006-12" db="EMBL/GenBank/DDBJ databases">
        <title>Complete sequence of Chlorobium phaeobacteroides DSM 266.</title>
        <authorList>
            <consortium name="US DOE Joint Genome Institute"/>
            <person name="Copeland A."/>
            <person name="Lucas S."/>
            <person name="Lapidus A."/>
            <person name="Barry K."/>
            <person name="Detter J.C."/>
            <person name="Glavina del Rio T."/>
            <person name="Hammon N."/>
            <person name="Israni S."/>
            <person name="Pitluck S."/>
            <person name="Goltsman E."/>
            <person name="Schmutz J."/>
            <person name="Larimer F."/>
            <person name="Land M."/>
            <person name="Hauser L."/>
            <person name="Mikhailova N."/>
            <person name="Li T."/>
            <person name="Overmann J."/>
            <person name="Bryant D.A."/>
            <person name="Richardson P."/>
        </authorList>
    </citation>
    <scope>NUCLEOTIDE SEQUENCE [LARGE SCALE GENOMIC DNA]</scope>
    <source>
        <strain>DSM 266 / SMG 266 / 2430</strain>
    </source>
</reference>
<gene>
    <name evidence="1" type="primary">purA</name>
    <name type="ordered locus">Cpha266_2390</name>
</gene>
<evidence type="ECO:0000255" key="1">
    <source>
        <dbReference type="HAMAP-Rule" id="MF_00011"/>
    </source>
</evidence>
<organism>
    <name type="scientific">Chlorobium phaeobacteroides (strain DSM 266 / SMG 266 / 2430)</name>
    <dbReference type="NCBI Taxonomy" id="290317"/>
    <lineage>
        <taxon>Bacteria</taxon>
        <taxon>Pseudomonadati</taxon>
        <taxon>Chlorobiota</taxon>
        <taxon>Chlorobiia</taxon>
        <taxon>Chlorobiales</taxon>
        <taxon>Chlorobiaceae</taxon>
        <taxon>Chlorobium/Pelodictyon group</taxon>
        <taxon>Chlorobium</taxon>
    </lineage>
</organism>
<sequence>MESPSFSKPVQSATVIVGTQFGDEGKGKLVDYLSDKYDIVVRYQGGANAGHTICFDNKTIVLHLLPSGIFHEGCVCVIGNGVVIDPAALLDEIRKVEELGYEVKGRLFISHNAHLIMPYHKRLDSLHEDAQGDQKIGTTGRGIGPSYEDKFARKGIRVVDLLNPEVLQEKLRDNLAAKNKLLKTIYEKEEFDIDAMVKEYAEFDKIIDPYVTNTQLYLNRQLKAGKTVLLEGAQGCLLDVDHGTYPYVTSSNPTSGGACTGSGIAPNYIGKVIGICKAYMTRVGNGAFPSELSDETGERLGQIGHEFGATTGRKRRCGWIDLVALRYSLAVNGVTEIALTKLDVLDTFEEISVCTSYMLDGKEIQDFPTDHQTLSRVTPVFKTMKGWKATNADARTFDEMRPEARNYVTFLEEELQVPVTFISVGPGRDETVFR</sequence>